<evidence type="ECO:0000255" key="1">
    <source>
        <dbReference type="PROSITE-ProRule" id="PRU00024"/>
    </source>
</evidence>
<evidence type="ECO:0000255" key="2">
    <source>
        <dbReference type="PROSITE-ProRule" id="PRU00357"/>
    </source>
</evidence>
<evidence type="ECO:0000305" key="3"/>
<evidence type="ECO:0007829" key="4">
    <source>
        <dbReference type="PDB" id="7VSP"/>
    </source>
</evidence>
<proteinExistence type="evidence at protein level"/>
<keyword id="KW-0002">3D-structure</keyword>
<keyword id="KW-0238">DNA-binding</keyword>
<keyword id="KW-0479">Metal-binding</keyword>
<keyword id="KW-0539">Nucleus</keyword>
<keyword id="KW-1185">Reference proteome</keyword>
<keyword id="KW-0677">Repeat</keyword>
<keyword id="KW-0804">Transcription</keyword>
<keyword id="KW-0805">Transcription regulation</keyword>
<keyword id="KW-0862">Zinc</keyword>
<keyword id="KW-0863">Zinc-finger</keyword>
<dbReference type="EMBL" id="L81120">
    <property type="protein sequence ID" value="AAB67880.1"/>
    <property type="molecule type" value="mRNA"/>
</dbReference>
<dbReference type="EMBL" id="L81119">
    <property type="protein sequence ID" value="AAB67879.1"/>
    <property type="molecule type" value="Genomic_DNA"/>
</dbReference>
<dbReference type="EMBL" id="AC021640">
    <property type="protein sequence ID" value="AAF32446.1"/>
    <property type="molecule type" value="Genomic_DNA"/>
</dbReference>
<dbReference type="EMBL" id="AC068900">
    <property type="protein sequence ID" value="AAG12597.1"/>
    <property type="molecule type" value="Genomic_DNA"/>
</dbReference>
<dbReference type="EMBL" id="CP002686">
    <property type="protein sequence ID" value="AEE73800.1"/>
    <property type="molecule type" value="Genomic_DNA"/>
</dbReference>
<dbReference type="EMBL" id="AF370149">
    <property type="protein sequence ID" value="AAK43964.1"/>
    <property type="molecule type" value="mRNA"/>
</dbReference>
<dbReference type="EMBL" id="AY059092">
    <property type="protein sequence ID" value="AAL15198.1"/>
    <property type="molecule type" value="mRNA"/>
</dbReference>
<dbReference type="EMBL" id="AY088779">
    <property type="protein sequence ID" value="AAM67092.1"/>
    <property type="molecule type" value="mRNA"/>
</dbReference>
<dbReference type="RefSeq" id="NP_186887.1">
    <property type="nucleotide sequence ID" value="NM_111105.3"/>
</dbReference>
<dbReference type="PDB" id="7VSP">
    <property type="method" value="X-ray"/>
    <property type="resolution" value="2.10 A"/>
    <property type="chains" value="A/B/C=1-120"/>
</dbReference>
<dbReference type="PDBsum" id="7VSP"/>
<dbReference type="SMR" id="Q96502"/>
<dbReference type="BioGRID" id="6631">
    <property type="interactions" value="10"/>
</dbReference>
<dbReference type="FunCoup" id="Q96502">
    <property type="interactions" value="162"/>
</dbReference>
<dbReference type="IntAct" id="Q96502">
    <property type="interactions" value="6"/>
</dbReference>
<dbReference type="STRING" id="3702.Q96502"/>
<dbReference type="PaxDb" id="3702-AT3G02380.1"/>
<dbReference type="EnsemblPlants" id="AT3G02380.1">
    <property type="protein sequence ID" value="AT3G02380.1"/>
    <property type="gene ID" value="AT3G02380"/>
</dbReference>
<dbReference type="GeneID" id="821298"/>
<dbReference type="Gramene" id="AT3G02380.1">
    <property type="protein sequence ID" value="AT3G02380.1"/>
    <property type="gene ID" value="AT3G02380"/>
</dbReference>
<dbReference type="KEGG" id="ath:AT3G02380"/>
<dbReference type="Araport" id="AT3G02380"/>
<dbReference type="TAIR" id="AT3G02380">
    <property type="gene designation" value="COL2"/>
</dbReference>
<dbReference type="eggNOG" id="KOG1601">
    <property type="taxonomic scope" value="Eukaryota"/>
</dbReference>
<dbReference type="HOGENOM" id="CLU_028225_3_2_1"/>
<dbReference type="InParanoid" id="Q96502"/>
<dbReference type="OMA" id="CTVYCEA"/>
<dbReference type="OrthoDB" id="153872at2759"/>
<dbReference type="PhylomeDB" id="Q96502"/>
<dbReference type="PRO" id="PR:Q96502"/>
<dbReference type="Proteomes" id="UP000006548">
    <property type="component" value="Chromosome 3"/>
</dbReference>
<dbReference type="ExpressionAtlas" id="Q96502">
    <property type="expression patterns" value="baseline and differential"/>
</dbReference>
<dbReference type="GO" id="GO:0005634">
    <property type="term" value="C:nucleus"/>
    <property type="evidence" value="ECO:0007669"/>
    <property type="project" value="UniProtKB-SubCell"/>
</dbReference>
<dbReference type="GO" id="GO:0003677">
    <property type="term" value="F:DNA binding"/>
    <property type="evidence" value="ECO:0007669"/>
    <property type="project" value="UniProtKB-KW"/>
</dbReference>
<dbReference type="GO" id="GO:0003700">
    <property type="term" value="F:DNA-binding transcription factor activity"/>
    <property type="evidence" value="ECO:0000250"/>
    <property type="project" value="TAIR"/>
</dbReference>
<dbReference type="GO" id="GO:0008270">
    <property type="term" value="F:zinc ion binding"/>
    <property type="evidence" value="ECO:0007669"/>
    <property type="project" value="UniProtKB-KW"/>
</dbReference>
<dbReference type="GO" id="GO:0009658">
    <property type="term" value="P:chloroplast organization"/>
    <property type="evidence" value="ECO:0000315"/>
    <property type="project" value="TAIR"/>
</dbReference>
<dbReference type="GO" id="GO:0009909">
    <property type="term" value="P:regulation of flower development"/>
    <property type="evidence" value="ECO:0000315"/>
    <property type="project" value="TAIR"/>
</dbReference>
<dbReference type="CDD" id="cd19821">
    <property type="entry name" value="Bbox1_BBX-like"/>
    <property type="match status" value="2"/>
</dbReference>
<dbReference type="InterPro" id="IPR010402">
    <property type="entry name" value="CCT_domain"/>
</dbReference>
<dbReference type="InterPro" id="IPR045281">
    <property type="entry name" value="CONSTANS-like"/>
</dbReference>
<dbReference type="InterPro" id="IPR049808">
    <property type="entry name" value="CONSTANS-like_Bbox1"/>
</dbReference>
<dbReference type="InterPro" id="IPR000315">
    <property type="entry name" value="Znf_B-box"/>
</dbReference>
<dbReference type="PANTHER" id="PTHR31319:SF39">
    <property type="entry name" value="ZINC FINGER PROTEIN CONSTANS-LIKE 1"/>
    <property type="match status" value="1"/>
</dbReference>
<dbReference type="PANTHER" id="PTHR31319">
    <property type="entry name" value="ZINC FINGER PROTEIN CONSTANS-LIKE 4"/>
    <property type="match status" value="1"/>
</dbReference>
<dbReference type="Pfam" id="PF06203">
    <property type="entry name" value="CCT"/>
    <property type="match status" value="1"/>
</dbReference>
<dbReference type="Pfam" id="PF00643">
    <property type="entry name" value="zf-B_box"/>
    <property type="match status" value="1"/>
</dbReference>
<dbReference type="SMART" id="SM00336">
    <property type="entry name" value="BBOX"/>
    <property type="match status" value="2"/>
</dbReference>
<dbReference type="PROSITE" id="PS51017">
    <property type="entry name" value="CCT"/>
    <property type="match status" value="1"/>
</dbReference>
<dbReference type="PROSITE" id="PS50119">
    <property type="entry name" value="ZF_BBOX"/>
    <property type="match status" value="2"/>
</dbReference>
<reference key="1">
    <citation type="online journal article" date="1996" name="Plant Gene Register">
        <title>COL2 is a homologue of the Arabidopsis flowering-time gene CONSTANS.</title>
        <authorList>
            <person name="Ledger S.E."/>
            <person name="Dare A.P."/>
            <person name="Putterill J.J."/>
        </authorList>
        <locator>PGR96-081</locator>
    </citation>
    <scope>NUCLEOTIDE SEQUENCE [GENOMIC DNA / MRNA]</scope>
    <source>
        <strain>cv. Landsberg erecta</strain>
        <tissue>Aerial part</tissue>
    </source>
</reference>
<reference key="2">
    <citation type="journal article" date="2000" name="Nature">
        <title>Sequence and analysis of chromosome 3 of the plant Arabidopsis thaliana.</title>
        <authorList>
            <person name="Salanoubat M."/>
            <person name="Lemcke K."/>
            <person name="Rieger M."/>
            <person name="Ansorge W."/>
            <person name="Unseld M."/>
            <person name="Fartmann B."/>
            <person name="Valle G."/>
            <person name="Bloecker H."/>
            <person name="Perez-Alonso M."/>
            <person name="Obermaier B."/>
            <person name="Delseny M."/>
            <person name="Boutry M."/>
            <person name="Grivell L.A."/>
            <person name="Mache R."/>
            <person name="Puigdomenech P."/>
            <person name="De Simone V."/>
            <person name="Choisne N."/>
            <person name="Artiguenave F."/>
            <person name="Robert C."/>
            <person name="Brottier P."/>
            <person name="Wincker P."/>
            <person name="Cattolico L."/>
            <person name="Weissenbach J."/>
            <person name="Saurin W."/>
            <person name="Quetier F."/>
            <person name="Schaefer M."/>
            <person name="Mueller-Auer S."/>
            <person name="Gabel C."/>
            <person name="Fuchs M."/>
            <person name="Benes V."/>
            <person name="Wurmbach E."/>
            <person name="Drzonek H."/>
            <person name="Erfle H."/>
            <person name="Jordan N."/>
            <person name="Bangert S."/>
            <person name="Wiedelmann R."/>
            <person name="Kranz H."/>
            <person name="Voss H."/>
            <person name="Holland R."/>
            <person name="Brandt P."/>
            <person name="Nyakatura G."/>
            <person name="Vezzi A."/>
            <person name="D'Angelo M."/>
            <person name="Pallavicini A."/>
            <person name="Toppo S."/>
            <person name="Simionati B."/>
            <person name="Conrad A."/>
            <person name="Hornischer K."/>
            <person name="Kauer G."/>
            <person name="Loehnert T.-H."/>
            <person name="Nordsiek G."/>
            <person name="Reichelt J."/>
            <person name="Scharfe M."/>
            <person name="Schoen O."/>
            <person name="Bargues M."/>
            <person name="Terol J."/>
            <person name="Climent J."/>
            <person name="Navarro P."/>
            <person name="Collado C."/>
            <person name="Perez-Perez A."/>
            <person name="Ottenwaelder B."/>
            <person name="Duchemin D."/>
            <person name="Cooke R."/>
            <person name="Laudie M."/>
            <person name="Berger-Llauro C."/>
            <person name="Purnelle B."/>
            <person name="Masuy D."/>
            <person name="de Haan M."/>
            <person name="Maarse A.C."/>
            <person name="Alcaraz J.-P."/>
            <person name="Cottet A."/>
            <person name="Casacuberta E."/>
            <person name="Monfort A."/>
            <person name="Argiriou A."/>
            <person name="Flores M."/>
            <person name="Liguori R."/>
            <person name="Vitale D."/>
            <person name="Mannhaupt G."/>
            <person name="Haase D."/>
            <person name="Schoof H."/>
            <person name="Rudd S."/>
            <person name="Zaccaria P."/>
            <person name="Mewes H.-W."/>
            <person name="Mayer K.F.X."/>
            <person name="Kaul S."/>
            <person name="Town C.D."/>
            <person name="Koo H.L."/>
            <person name="Tallon L.J."/>
            <person name="Jenkins J."/>
            <person name="Rooney T."/>
            <person name="Rizzo M."/>
            <person name="Walts A."/>
            <person name="Utterback T."/>
            <person name="Fujii C.Y."/>
            <person name="Shea T.P."/>
            <person name="Creasy T.H."/>
            <person name="Haas B."/>
            <person name="Maiti R."/>
            <person name="Wu D."/>
            <person name="Peterson J."/>
            <person name="Van Aken S."/>
            <person name="Pai G."/>
            <person name="Militscher J."/>
            <person name="Sellers P."/>
            <person name="Gill J.E."/>
            <person name="Feldblyum T.V."/>
            <person name="Preuss D."/>
            <person name="Lin X."/>
            <person name="Nierman W.C."/>
            <person name="Salzberg S.L."/>
            <person name="White O."/>
            <person name="Venter J.C."/>
            <person name="Fraser C.M."/>
            <person name="Kaneko T."/>
            <person name="Nakamura Y."/>
            <person name="Sato S."/>
            <person name="Kato T."/>
            <person name="Asamizu E."/>
            <person name="Sasamoto S."/>
            <person name="Kimura T."/>
            <person name="Idesawa K."/>
            <person name="Kawashima K."/>
            <person name="Kishida Y."/>
            <person name="Kiyokawa C."/>
            <person name="Kohara M."/>
            <person name="Matsumoto M."/>
            <person name="Matsuno A."/>
            <person name="Muraki A."/>
            <person name="Nakayama S."/>
            <person name="Nakazaki N."/>
            <person name="Shinpo S."/>
            <person name="Takeuchi C."/>
            <person name="Wada T."/>
            <person name="Watanabe A."/>
            <person name="Yamada M."/>
            <person name="Yasuda M."/>
            <person name="Tabata S."/>
        </authorList>
    </citation>
    <scope>NUCLEOTIDE SEQUENCE [LARGE SCALE GENOMIC DNA]</scope>
    <source>
        <strain>cv. Columbia</strain>
    </source>
</reference>
<reference key="3">
    <citation type="journal article" date="2017" name="Plant J.">
        <title>Araport11: a complete reannotation of the Arabidopsis thaliana reference genome.</title>
        <authorList>
            <person name="Cheng C.Y."/>
            <person name="Krishnakumar V."/>
            <person name="Chan A.P."/>
            <person name="Thibaud-Nissen F."/>
            <person name="Schobel S."/>
            <person name="Town C.D."/>
        </authorList>
    </citation>
    <scope>GENOME REANNOTATION</scope>
    <source>
        <strain>cv. Columbia</strain>
    </source>
</reference>
<reference key="4">
    <citation type="journal article" date="2003" name="Science">
        <title>Empirical analysis of transcriptional activity in the Arabidopsis genome.</title>
        <authorList>
            <person name="Yamada K."/>
            <person name="Lim J."/>
            <person name="Dale J.M."/>
            <person name="Chen H."/>
            <person name="Shinn P."/>
            <person name="Palm C.J."/>
            <person name="Southwick A.M."/>
            <person name="Wu H.C."/>
            <person name="Kim C.J."/>
            <person name="Nguyen M."/>
            <person name="Pham P.K."/>
            <person name="Cheuk R.F."/>
            <person name="Karlin-Newmann G."/>
            <person name="Liu S.X."/>
            <person name="Lam B."/>
            <person name="Sakano H."/>
            <person name="Wu T."/>
            <person name="Yu G."/>
            <person name="Miranda M."/>
            <person name="Quach H.L."/>
            <person name="Tripp M."/>
            <person name="Chang C.H."/>
            <person name="Lee J.M."/>
            <person name="Toriumi M.J."/>
            <person name="Chan M.M."/>
            <person name="Tang C.C."/>
            <person name="Onodera C.S."/>
            <person name="Deng J.M."/>
            <person name="Akiyama K."/>
            <person name="Ansari Y."/>
            <person name="Arakawa T."/>
            <person name="Banh J."/>
            <person name="Banno F."/>
            <person name="Bowser L."/>
            <person name="Brooks S.Y."/>
            <person name="Carninci P."/>
            <person name="Chao Q."/>
            <person name="Choy N."/>
            <person name="Enju A."/>
            <person name="Goldsmith A.D."/>
            <person name="Gurjal M."/>
            <person name="Hansen N.F."/>
            <person name="Hayashizaki Y."/>
            <person name="Johnson-Hopson C."/>
            <person name="Hsuan V.W."/>
            <person name="Iida K."/>
            <person name="Karnes M."/>
            <person name="Khan S."/>
            <person name="Koesema E."/>
            <person name="Ishida J."/>
            <person name="Jiang P.X."/>
            <person name="Jones T."/>
            <person name="Kawai J."/>
            <person name="Kamiya A."/>
            <person name="Meyers C."/>
            <person name="Nakajima M."/>
            <person name="Narusaka M."/>
            <person name="Seki M."/>
            <person name="Sakurai T."/>
            <person name="Satou M."/>
            <person name="Tamse R."/>
            <person name="Vaysberg M."/>
            <person name="Wallender E.K."/>
            <person name="Wong C."/>
            <person name="Yamamura Y."/>
            <person name="Yuan S."/>
            <person name="Shinozaki K."/>
            <person name="Davis R.W."/>
            <person name="Theologis A."/>
            <person name="Ecker J.R."/>
        </authorList>
    </citation>
    <scope>NUCLEOTIDE SEQUENCE [LARGE SCALE MRNA]</scope>
    <source>
        <strain>cv. Columbia</strain>
    </source>
</reference>
<reference key="5">
    <citation type="submission" date="2002-03" db="EMBL/GenBank/DDBJ databases">
        <title>Full-length cDNA from Arabidopsis thaliana.</title>
        <authorList>
            <person name="Brover V.V."/>
            <person name="Troukhan M.E."/>
            <person name="Alexandrov N.A."/>
            <person name="Lu Y.-P."/>
            <person name="Flavell R.B."/>
            <person name="Feldmann K.A."/>
        </authorList>
    </citation>
    <scope>NUCLEOTIDE SEQUENCE [LARGE SCALE MRNA]</scope>
</reference>
<reference key="6">
    <citation type="journal article" date="2001" name="Plant J.">
        <title>Analysis of the function of two circadian-regulated CONSTANS-LIKE genes.</title>
        <authorList>
            <person name="Ledger S.E."/>
            <person name="Strayer C."/>
            <person name="Ashton F."/>
            <person name="Kay S.A."/>
            <person name="Putterill J.J."/>
        </authorList>
    </citation>
    <scope>CHARACTERIZATION</scope>
</reference>
<reference key="7">
    <citation type="journal article" date="2003" name="Plant Physiol.">
        <title>The evolution of CONSTANS-like gene families in barley, rice, and Arabidopsis.</title>
        <authorList>
            <person name="Griffiths S."/>
            <person name="Dunford R.P."/>
            <person name="Coupland G."/>
            <person name="Laurie D.A."/>
        </authorList>
    </citation>
    <scope>GENE FAMILY</scope>
    <scope>NOMENCLATURE</scope>
</reference>
<sequence length="347" mass="38524">MLKEESNESGTWARACDTCRSAACTVYCEADSAYLCTTCDARVHAANRVASRHERVRVCQSCESAPAAFLCKADAASLCTACDAEIHSANPLARRHQRVPILPLSANSCSSMAPSETDADNDEDDREVASWLLPNPGKNIGNQNNGFLFGVEYLDLVDYSSSMDNQFEDNQYTHYQRSFGGDGVVPLQVEESTSHLQQSQQNFQLGINYGFSSGAHYNNNSLKDLNHSASVSSMDISVVPESTASDITVQHPRTTKETIDQLSGPPTQVVQQLTPMEREARVLRYREKKKTRKFDKTIRYASRKAYAEIRPRIKGRFAKRIETEAEAEEIFSTSLMSETGYGIVPSF</sequence>
<gene>
    <name type="primary">COL2</name>
    <name type="ordered locus">At3g02380</name>
    <name type="ORF">F11A12.106</name>
    <name type="ORF">F11A12.7</name>
    <name type="ORF">F16B3.2</name>
</gene>
<accession>Q96502</accession>
<protein>
    <recommendedName>
        <fullName>Zinc finger protein CONSTANS-LIKE 2</fullName>
    </recommendedName>
</protein>
<name>COL2_ARATH</name>
<organism>
    <name type="scientific">Arabidopsis thaliana</name>
    <name type="common">Mouse-ear cress</name>
    <dbReference type="NCBI Taxonomy" id="3702"/>
    <lineage>
        <taxon>Eukaryota</taxon>
        <taxon>Viridiplantae</taxon>
        <taxon>Streptophyta</taxon>
        <taxon>Embryophyta</taxon>
        <taxon>Tracheophyta</taxon>
        <taxon>Spermatophyta</taxon>
        <taxon>Magnoliopsida</taxon>
        <taxon>eudicotyledons</taxon>
        <taxon>Gunneridae</taxon>
        <taxon>Pentapetalae</taxon>
        <taxon>rosids</taxon>
        <taxon>malvids</taxon>
        <taxon>Brassicales</taxon>
        <taxon>Brassicaceae</taxon>
        <taxon>Camelineae</taxon>
        <taxon>Arabidopsis</taxon>
    </lineage>
</organism>
<comment type="function">
    <text>Putative transcription factor. Does not affect flowering time.</text>
</comment>
<comment type="interaction">
    <interactant intactId="EBI-4425260">
        <id>Q96502</id>
    </interactant>
    <interactant intactId="EBI-15192709">
        <id>Q6NLH4</id>
        <label>BBX29</label>
    </interactant>
    <organismsDiffer>false</organismsDiffer>
    <experiments>3</experiments>
</comment>
<comment type="interaction">
    <interactant intactId="EBI-4425260">
        <id>Q96502</id>
    </interactant>
    <interactant intactId="EBI-15191571">
        <id>Q4PSE2</id>
        <label>NFYC8</label>
    </interactant>
    <organismsDiffer>false</organismsDiffer>
    <experiments>3</experiments>
</comment>
<comment type="subcellular location">
    <subcellularLocation>
        <location evidence="3">Nucleus</location>
    </subcellularLocation>
</comment>
<comment type="tissue specificity">
    <text>Highly expressed in leaves. Expressed at lower levels in stems, flowers and siliques. Not detected in roots.</text>
</comment>
<comment type="developmental stage">
    <text>Expressed throughout development.</text>
</comment>
<comment type="induction">
    <text>Expressed with a circadian rhythm showing a peak at dawn.</text>
</comment>
<comment type="similarity">
    <text evidence="3">Belongs to the CONSTANS family.</text>
</comment>
<feature type="chain" id="PRO_0000113279" description="Zinc finger protein CONSTANS-LIKE 2">
    <location>
        <begin position="1"/>
        <end position="347"/>
    </location>
</feature>
<feature type="domain" description="CCT" evidence="2">
    <location>
        <begin position="278"/>
        <end position="320"/>
    </location>
</feature>
<feature type="zinc finger region" description="B box-type 1; atypical" evidence="1">
    <location>
        <begin position="16"/>
        <end position="58"/>
    </location>
</feature>
<feature type="zinc finger region" description="B box-type 2; atypical" evidence="1">
    <location>
        <begin position="59"/>
        <end position="101"/>
    </location>
</feature>
<feature type="binding site" evidence="1">
    <location>
        <position position="16"/>
    </location>
    <ligand>
        <name>Zn(2+)</name>
        <dbReference type="ChEBI" id="CHEBI:29105"/>
        <label>1</label>
    </ligand>
</feature>
<feature type="binding site" evidence="1">
    <location>
        <position position="19"/>
    </location>
    <ligand>
        <name>Zn(2+)</name>
        <dbReference type="ChEBI" id="CHEBI:29105"/>
        <label>1</label>
    </ligand>
</feature>
<feature type="binding site" evidence="1">
    <location>
        <position position="39"/>
    </location>
    <ligand>
        <name>Zn(2+)</name>
        <dbReference type="ChEBI" id="CHEBI:29105"/>
        <label>1</label>
    </ligand>
</feature>
<feature type="binding site" evidence="1">
    <location>
        <position position="44"/>
    </location>
    <ligand>
        <name>Zn(2+)</name>
        <dbReference type="ChEBI" id="CHEBI:29105"/>
        <label>1</label>
    </ligand>
</feature>
<feature type="binding site" evidence="1">
    <location>
        <position position="59"/>
    </location>
    <ligand>
        <name>Zn(2+)</name>
        <dbReference type="ChEBI" id="CHEBI:29105"/>
        <label>2</label>
    </ligand>
</feature>
<feature type="binding site" evidence="1">
    <location>
        <position position="62"/>
    </location>
    <ligand>
        <name>Zn(2+)</name>
        <dbReference type="ChEBI" id="CHEBI:29105"/>
        <label>2</label>
    </ligand>
</feature>
<feature type="binding site" evidence="1">
    <location>
        <position position="82"/>
    </location>
    <ligand>
        <name>Zn(2+)</name>
        <dbReference type="ChEBI" id="CHEBI:29105"/>
        <label>2</label>
    </ligand>
</feature>
<feature type="binding site" evidence="1">
    <location>
        <position position="87"/>
    </location>
    <ligand>
        <name>Zn(2+)</name>
        <dbReference type="ChEBI" id="CHEBI:29105"/>
        <label>2</label>
    </ligand>
</feature>
<feature type="turn" evidence="4">
    <location>
        <begin position="17"/>
        <end position="19"/>
    </location>
</feature>
<feature type="strand" evidence="4">
    <location>
        <begin position="20"/>
        <end position="23"/>
    </location>
</feature>
<feature type="strand" evidence="4">
    <location>
        <begin position="26"/>
        <end position="28"/>
    </location>
</feature>
<feature type="turn" evidence="4">
    <location>
        <begin position="29"/>
        <end position="32"/>
    </location>
</feature>
<feature type="strand" evidence="4">
    <location>
        <begin position="33"/>
        <end position="35"/>
    </location>
</feature>
<feature type="helix" evidence="4">
    <location>
        <begin position="37"/>
        <end position="44"/>
    </location>
</feature>
<feature type="helix" evidence="4">
    <location>
        <begin position="48"/>
        <end position="51"/>
    </location>
</feature>
<feature type="strand" evidence="4">
    <location>
        <begin position="55"/>
        <end position="58"/>
    </location>
</feature>
<feature type="turn" evidence="4">
    <location>
        <begin position="60"/>
        <end position="62"/>
    </location>
</feature>
<feature type="strand" evidence="4">
    <location>
        <begin position="63"/>
        <end position="66"/>
    </location>
</feature>
<feature type="strand" evidence="4">
    <location>
        <begin position="69"/>
        <end position="71"/>
    </location>
</feature>
<feature type="turn" evidence="4">
    <location>
        <begin position="72"/>
        <end position="75"/>
    </location>
</feature>
<feature type="strand" evidence="4">
    <location>
        <begin position="76"/>
        <end position="78"/>
    </location>
</feature>
<feature type="helix" evidence="4">
    <location>
        <begin position="80"/>
        <end position="87"/>
    </location>
</feature>
<feature type="helix" evidence="4">
    <location>
        <begin position="91"/>
        <end position="94"/>
    </location>
</feature>